<comment type="function">
    <text evidence="1">Promotes RNA polymerase assembly. Latches the N- and C-terminal regions of the beta' subunit thereby facilitating its interaction with the beta and alpha subunits.</text>
</comment>
<comment type="catalytic activity">
    <reaction evidence="1">
        <text>RNA(n) + a ribonucleoside 5'-triphosphate = RNA(n+1) + diphosphate</text>
        <dbReference type="Rhea" id="RHEA:21248"/>
        <dbReference type="Rhea" id="RHEA-COMP:14527"/>
        <dbReference type="Rhea" id="RHEA-COMP:17342"/>
        <dbReference type="ChEBI" id="CHEBI:33019"/>
        <dbReference type="ChEBI" id="CHEBI:61557"/>
        <dbReference type="ChEBI" id="CHEBI:140395"/>
        <dbReference type="EC" id="2.7.7.6"/>
    </reaction>
</comment>
<comment type="subunit">
    <text evidence="1">The RNAP catalytic core consists of 2 alpha, 1 beta, 1 beta' and 1 omega subunit. When a sigma factor is associated with the core the holoenzyme is formed, which can initiate transcription.</text>
</comment>
<comment type="similarity">
    <text evidence="1">Belongs to the RNA polymerase subunit omega family.</text>
</comment>
<reference key="1">
    <citation type="journal article" date="2011" name="Stand. Genomic Sci.">
        <title>Complete genome sequence of Rhodospirillum rubrum type strain (S1).</title>
        <authorList>
            <person name="Munk A.C."/>
            <person name="Copeland A."/>
            <person name="Lucas S."/>
            <person name="Lapidus A."/>
            <person name="Del Rio T.G."/>
            <person name="Barry K."/>
            <person name="Detter J.C."/>
            <person name="Hammon N."/>
            <person name="Israni S."/>
            <person name="Pitluck S."/>
            <person name="Brettin T."/>
            <person name="Bruce D."/>
            <person name="Han C."/>
            <person name="Tapia R."/>
            <person name="Gilna P."/>
            <person name="Schmutz J."/>
            <person name="Larimer F."/>
            <person name="Land M."/>
            <person name="Kyrpides N.C."/>
            <person name="Mavromatis K."/>
            <person name="Richardson P."/>
            <person name="Rohde M."/>
            <person name="Goeker M."/>
            <person name="Klenk H.P."/>
            <person name="Zhang Y."/>
            <person name="Roberts G.P."/>
            <person name="Reslewic S."/>
            <person name="Schwartz D.C."/>
        </authorList>
    </citation>
    <scope>NUCLEOTIDE SEQUENCE [LARGE SCALE GENOMIC DNA]</scope>
    <source>
        <strain>ATCC 11170 / ATH 1.1.1 / DSM 467 / LMG 4362 / NCIMB 8255 / S1</strain>
    </source>
</reference>
<evidence type="ECO:0000255" key="1">
    <source>
        <dbReference type="HAMAP-Rule" id="MF_00366"/>
    </source>
</evidence>
<evidence type="ECO:0000256" key="2">
    <source>
        <dbReference type="SAM" id="MobiDB-lite"/>
    </source>
</evidence>
<keyword id="KW-0240">DNA-directed RNA polymerase</keyword>
<keyword id="KW-0548">Nucleotidyltransferase</keyword>
<keyword id="KW-1185">Reference proteome</keyword>
<keyword id="KW-0804">Transcription</keyword>
<keyword id="KW-0808">Transferase</keyword>
<accession>Q2RT88</accession>
<gene>
    <name evidence="1" type="primary">rpoZ</name>
    <name type="ordered locus">Rru_A1857</name>
</gene>
<sequence>MARVTVEDCVLKIPNRFELVLVAGQRARDISAGSALTVDRDNDKNPVVSLREIADGTVDIPNLKEAVIQGLQKHVEIDEPEEDDFDAMGLDRDLMPGVALAEDDDTLEADGLTIHDGADSDLDLSDDAGQDTDEADED</sequence>
<protein>
    <recommendedName>
        <fullName evidence="1">DNA-directed RNA polymerase subunit omega</fullName>
        <shortName evidence="1">RNAP omega subunit</shortName>
        <ecNumber evidence="1">2.7.7.6</ecNumber>
    </recommendedName>
    <alternativeName>
        <fullName evidence="1">RNA polymerase omega subunit</fullName>
    </alternativeName>
    <alternativeName>
        <fullName evidence="1">Transcriptase subunit omega</fullName>
    </alternativeName>
</protein>
<name>RPOZ_RHORT</name>
<organism>
    <name type="scientific">Rhodospirillum rubrum (strain ATCC 11170 / ATH 1.1.1 / DSM 467 / LMG 4362 / NCIMB 8255 / S1)</name>
    <dbReference type="NCBI Taxonomy" id="269796"/>
    <lineage>
        <taxon>Bacteria</taxon>
        <taxon>Pseudomonadati</taxon>
        <taxon>Pseudomonadota</taxon>
        <taxon>Alphaproteobacteria</taxon>
        <taxon>Rhodospirillales</taxon>
        <taxon>Rhodospirillaceae</taxon>
        <taxon>Rhodospirillum</taxon>
    </lineage>
</organism>
<proteinExistence type="inferred from homology"/>
<dbReference type="EC" id="2.7.7.6" evidence="1"/>
<dbReference type="EMBL" id="CP000230">
    <property type="protein sequence ID" value="ABC22657.1"/>
    <property type="molecule type" value="Genomic_DNA"/>
</dbReference>
<dbReference type="RefSeq" id="WP_011389610.1">
    <property type="nucleotide sequence ID" value="NC_007643.1"/>
</dbReference>
<dbReference type="RefSeq" id="YP_426944.1">
    <property type="nucleotide sequence ID" value="NC_007643.1"/>
</dbReference>
<dbReference type="SMR" id="Q2RT88"/>
<dbReference type="STRING" id="269796.Rru_A1857"/>
<dbReference type="EnsemblBacteria" id="ABC22657">
    <property type="protein sequence ID" value="ABC22657"/>
    <property type="gene ID" value="Rru_A1857"/>
</dbReference>
<dbReference type="KEGG" id="rru:Rru_A1857"/>
<dbReference type="PATRIC" id="fig|269796.9.peg.1937"/>
<dbReference type="eggNOG" id="COG1758">
    <property type="taxonomic scope" value="Bacteria"/>
</dbReference>
<dbReference type="HOGENOM" id="CLU_125406_2_0_5"/>
<dbReference type="PhylomeDB" id="Q2RT88"/>
<dbReference type="Proteomes" id="UP000001929">
    <property type="component" value="Chromosome"/>
</dbReference>
<dbReference type="GO" id="GO:0000428">
    <property type="term" value="C:DNA-directed RNA polymerase complex"/>
    <property type="evidence" value="ECO:0007669"/>
    <property type="project" value="UniProtKB-KW"/>
</dbReference>
<dbReference type="GO" id="GO:0003677">
    <property type="term" value="F:DNA binding"/>
    <property type="evidence" value="ECO:0007669"/>
    <property type="project" value="UniProtKB-UniRule"/>
</dbReference>
<dbReference type="GO" id="GO:0003899">
    <property type="term" value="F:DNA-directed RNA polymerase activity"/>
    <property type="evidence" value="ECO:0007669"/>
    <property type="project" value="UniProtKB-UniRule"/>
</dbReference>
<dbReference type="GO" id="GO:0006351">
    <property type="term" value="P:DNA-templated transcription"/>
    <property type="evidence" value="ECO:0007669"/>
    <property type="project" value="UniProtKB-UniRule"/>
</dbReference>
<dbReference type="Gene3D" id="3.90.940.10">
    <property type="match status" value="1"/>
</dbReference>
<dbReference type="HAMAP" id="MF_00366">
    <property type="entry name" value="RNApol_bact_RpoZ"/>
    <property type="match status" value="1"/>
</dbReference>
<dbReference type="InterPro" id="IPR003716">
    <property type="entry name" value="DNA-dir_RNA_pol_omega"/>
</dbReference>
<dbReference type="InterPro" id="IPR006110">
    <property type="entry name" value="Pol_omega/Rpo6/RPB6"/>
</dbReference>
<dbReference type="InterPro" id="IPR036161">
    <property type="entry name" value="RPB6/omega-like_sf"/>
</dbReference>
<dbReference type="NCBIfam" id="TIGR00690">
    <property type="entry name" value="rpoZ"/>
    <property type="match status" value="1"/>
</dbReference>
<dbReference type="PANTHER" id="PTHR34476">
    <property type="entry name" value="DNA-DIRECTED RNA POLYMERASE SUBUNIT OMEGA"/>
    <property type="match status" value="1"/>
</dbReference>
<dbReference type="PANTHER" id="PTHR34476:SF1">
    <property type="entry name" value="DNA-DIRECTED RNA POLYMERASE SUBUNIT OMEGA"/>
    <property type="match status" value="1"/>
</dbReference>
<dbReference type="Pfam" id="PF01192">
    <property type="entry name" value="RNA_pol_Rpb6"/>
    <property type="match status" value="1"/>
</dbReference>
<dbReference type="SMART" id="SM01409">
    <property type="entry name" value="RNA_pol_Rpb6"/>
    <property type="match status" value="1"/>
</dbReference>
<dbReference type="SUPFAM" id="SSF63562">
    <property type="entry name" value="RPB6/omega subunit-like"/>
    <property type="match status" value="1"/>
</dbReference>
<feature type="chain" id="PRO_0000237499" description="DNA-directed RNA polymerase subunit omega">
    <location>
        <begin position="1"/>
        <end position="138"/>
    </location>
</feature>
<feature type="region of interest" description="Disordered" evidence="2">
    <location>
        <begin position="101"/>
        <end position="138"/>
    </location>
</feature>
<feature type="compositionally biased region" description="Acidic residues" evidence="2">
    <location>
        <begin position="119"/>
        <end position="138"/>
    </location>
</feature>